<evidence type="ECO:0000255" key="1">
    <source>
        <dbReference type="HAMAP-Rule" id="MF_01045"/>
    </source>
</evidence>
<accession>B7LP46</accession>
<protein>
    <recommendedName>
        <fullName evidence="1">D-cysteine desulfhydrase</fullName>
        <ecNumber evidence="1">4.4.1.15</ecNumber>
    </recommendedName>
</protein>
<name>DCYD_ESCF3</name>
<gene>
    <name evidence="1" type="primary">dcyD</name>
    <name type="ordered locus">EFER_1175</name>
</gene>
<sequence length="328" mass="35038">MSLQNLTRFPRLEFIGAPTPLEYLPRFSDYLGREIFIKRDDVTPLAMGGNKVRKLEFLAADALREGADTLVTAGAIQSNHVRQTAAVAAKLGLHCVALLENPIGTQAENYLSNGNRLLLDLFNVQVEMCAALDDPDAQLQELATRIEAQGFRPYVIPVGGSNALGALGYVESALEIAQQCEGAVNLSSVVVASGSAGTHAGLAVGLEHLLPETELIGVTVSRSVADQKPKVVALQQAVARELELSAAAEITLWDEYFAPGYGTPNEEGMEAVKLLARLEGILLDPVYTGKAMAGLIDGISQKRFKDQGPILFIHTGGAPALFAYHPHV</sequence>
<feature type="chain" id="PRO_1000136163" description="D-cysteine desulfhydrase">
    <location>
        <begin position="1"/>
        <end position="328"/>
    </location>
</feature>
<feature type="modified residue" description="N6-(pyridoxal phosphate)lysine" evidence="1">
    <location>
        <position position="51"/>
    </location>
</feature>
<dbReference type="EC" id="4.4.1.15" evidence="1"/>
<dbReference type="EMBL" id="CU928158">
    <property type="protein sequence ID" value="CAQ88702.1"/>
    <property type="molecule type" value="Genomic_DNA"/>
</dbReference>
<dbReference type="RefSeq" id="WP_000058228.1">
    <property type="nucleotide sequence ID" value="NC_011740.1"/>
</dbReference>
<dbReference type="SMR" id="B7LP46"/>
<dbReference type="GeneID" id="75057779"/>
<dbReference type="KEGG" id="efe:EFER_1175"/>
<dbReference type="HOGENOM" id="CLU_048897_1_0_6"/>
<dbReference type="OrthoDB" id="9801249at2"/>
<dbReference type="Proteomes" id="UP000000745">
    <property type="component" value="Chromosome"/>
</dbReference>
<dbReference type="GO" id="GO:0019148">
    <property type="term" value="F:D-cysteine desulfhydrase activity"/>
    <property type="evidence" value="ECO:0007669"/>
    <property type="project" value="UniProtKB-UniRule"/>
</dbReference>
<dbReference type="GO" id="GO:0046416">
    <property type="term" value="P:D-amino acid metabolic process"/>
    <property type="evidence" value="ECO:0007669"/>
    <property type="project" value="UniProtKB-UniRule"/>
</dbReference>
<dbReference type="CDD" id="cd06449">
    <property type="entry name" value="ACCD"/>
    <property type="match status" value="1"/>
</dbReference>
<dbReference type="FunFam" id="3.40.50.1100:FF:000017">
    <property type="entry name" value="D-cysteine desulfhydrase"/>
    <property type="match status" value="1"/>
</dbReference>
<dbReference type="Gene3D" id="3.40.50.1100">
    <property type="match status" value="2"/>
</dbReference>
<dbReference type="HAMAP" id="MF_01045">
    <property type="entry name" value="D_Cys_desulfhydr"/>
    <property type="match status" value="1"/>
</dbReference>
<dbReference type="InterPro" id="IPR027278">
    <property type="entry name" value="ACCD_DCysDesulf"/>
</dbReference>
<dbReference type="InterPro" id="IPR005966">
    <property type="entry name" value="D-Cys_desShydrase"/>
</dbReference>
<dbReference type="InterPro" id="IPR023702">
    <property type="entry name" value="D_Cys_desulphydr_bac"/>
</dbReference>
<dbReference type="InterPro" id="IPR001926">
    <property type="entry name" value="TrpB-like_PALP"/>
</dbReference>
<dbReference type="InterPro" id="IPR036052">
    <property type="entry name" value="TrpB-like_PALP_sf"/>
</dbReference>
<dbReference type="NCBIfam" id="TIGR01275">
    <property type="entry name" value="ACC_deam_rel"/>
    <property type="match status" value="1"/>
</dbReference>
<dbReference type="NCBIfam" id="NF003029">
    <property type="entry name" value="PRK03910.1-1"/>
    <property type="match status" value="1"/>
</dbReference>
<dbReference type="NCBIfam" id="NF003030">
    <property type="entry name" value="PRK03910.1-3"/>
    <property type="match status" value="1"/>
</dbReference>
<dbReference type="NCBIfam" id="NF003032">
    <property type="entry name" value="PRK03910.1-5"/>
    <property type="match status" value="1"/>
</dbReference>
<dbReference type="PANTHER" id="PTHR43780">
    <property type="entry name" value="1-AMINOCYCLOPROPANE-1-CARBOXYLATE DEAMINASE-RELATED"/>
    <property type="match status" value="1"/>
</dbReference>
<dbReference type="PANTHER" id="PTHR43780:SF2">
    <property type="entry name" value="1-AMINOCYCLOPROPANE-1-CARBOXYLATE DEAMINASE-RELATED"/>
    <property type="match status" value="1"/>
</dbReference>
<dbReference type="Pfam" id="PF00291">
    <property type="entry name" value="PALP"/>
    <property type="match status" value="1"/>
</dbReference>
<dbReference type="PIRSF" id="PIRSF006278">
    <property type="entry name" value="ACCD_DCysDesulf"/>
    <property type="match status" value="1"/>
</dbReference>
<dbReference type="SUPFAM" id="SSF53686">
    <property type="entry name" value="Tryptophan synthase beta subunit-like PLP-dependent enzymes"/>
    <property type="match status" value="1"/>
</dbReference>
<proteinExistence type="inferred from homology"/>
<reference key="1">
    <citation type="journal article" date="2009" name="PLoS Genet.">
        <title>Organised genome dynamics in the Escherichia coli species results in highly diverse adaptive paths.</title>
        <authorList>
            <person name="Touchon M."/>
            <person name="Hoede C."/>
            <person name="Tenaillon O."/>
            <person name="Barbe V."/>
            <person name="Baeriswyl S."/>
            <person name="Bidet P."/>
            <person name="Bingen E."/>
            <person name="Bonacorsi S."/>
            <person name="Bouchier C."/>
            <person name="Bouvet O."/>
            <person name="Calteau A."/>
            <person name="Chiapello H."/>
            <person name="Clermont O."/>
            <person name="Cruveiller S."/>
            <person name="Danchin A."/>
            <person name="Diard M."/>
            <person name="Dossat C."/>
            <person name="Karoui M.E."/>
            <person name="Frapy E."/>
            <person name="Garry L."/>
            <person name="Ghigo J.M."/>
            <person name="Gilles A.M."/>
            <person name="Johnson J."/>
            <person name="Le Bouguenec C."/>
            <person name="Lescat M."/>
            <person name="Mangenot S."/>
            <person name="Martinez-Jehanne V."/>
            <person name="Matic I."/>
            <person name="Nassif X."/>
            <person name="Oztas S."/>
            <person name="Petit M.A."/>
            <person name="Pichon C."/>
            <person name="Rouy Z."/>
            <person name="Ruf C.S."/>
            <person name="Schneider D."/>
            <person name="Tourret J."/>
            <person name="Vacherie B."/>
            <person name="Vallenet D."/>
            <person name="Medigue C."/>
            <person name="Rocha E.P.C."/>
            <person name="Denamur E."/>
        </authorList>
    </citation>
    <scope>NUCLEOTIDE SEQUENCE [LARGE SCALE GENOMIC DNA]</scope>
    <source>
        <strain>ATCC 35469 / DSM 13698 / BCRC 15582 / CCUG 18766 / IAM 14443 / JCM 21226 / LMG 7866 / NBRC 102419 / NCTC 12128 / CDC 0568-73</strain>
    </source>
</reference>
<keyword id="KW-0456">Lyase</keyword>
<keyword id="KW-0663">Pyridoxal phosphate</keyword>
<comment type="function">
    <text evidence="1">Catalyzes the alpha,beta-elimination reaction of D-cysteine and of several D-cysteine derivatives. It could be a defense mechanism against D-cysteine.</text>
</comment>
<comment type="catalytic activity">
    <reaction evidence="1">
        <text>D-cysteine + H2O = hydrogen sulfide + pyruvate + NH4(+) + H(+)</text>
        <dbReference type="Rhea" id="RHEA:11268"/>
        <dbReference type="ChEBI" id="CHEBI:15361"/>
        <dbReference type="ChEBI" id="CHEBI:15377"/>
        <dbReference type="ChEBI" id="CHEBI:15378"/>
        <dbReference type="ChEBI" id="CHEBI:28938"/>
        <dbReference type="ChEBI" id="CHEBI:29919"/>
        <dbReference type="ChEBI" id="CHEBI:35236"/>
        <dbReference type="EC" id="4.4.1.15"/>
    </reaction>
</comment>
<comment type="cofactor">
    <cofactor evidence="1">
        <name>pyridoxal 5'-phosphate</name>
        <dbReference type="ChEBI" id="CHEBI:597326"/>
    </cofactor>
</comment>
<comment type="subunit">
    <text evidence="1">Homodimer.</text>
</comment>
<comment type="similarity">
    <text evidence="1">Belongs to the ACC deaminase/D-cysteine desulfhydrase family.</text>
</comment>
<organism>
    <name type="scientific">Escherichia fergusonii (strain ATCC 35469 / DSM 13698 / CCUG 18766 / IAM 14443 / JCM 21226 / LMG 7866 / NBRC 102419 / NCTC 12128 / CDC 0568-73)</name>
    <dbReference type="NCBI Taxonomy" id="585054"/>
    <lineage>
        <taxon>Bacteria</taxon>
        <taxon>Pseudomonadati</taxon>
        <taxon>Pseudomonadota</taxon>
        <taxon>Gammaproteobacteria</taxon>
        <taxon>Enterobacterales</taxon>
        <taxon>Enterobacteriaceae</taxon>
        <taxon>Escherichia</taxon>
    </lineage>
</organism>